<comment type="function">
    <text evidence="3">Peptidyl-tRNA hydrolase involved in the recycling of tRNA-Lys from diacetyl-lysyl-tRNA-Lys and is important for mitochondrial function.</text>
</comment>
<comment type="catalytic activity">
    <reaction evidence="3">
        <text>an N-acyl-L-alpha-aminoacyl-tRNA + H2O = an N-acyl-L-amino acid + a tRNA + H(+)</text>
        <dbReference type="Rhea" id="RHEA:54448"/>
        <dbReference type="Rhea" id="RHEA-COMP:10123"/>
        <dbReference type="Rhea" id="RHEA-COMP:13883"/>
        <dbReference type="ChEBI" id="CHEBI:15377"/>
        <dbReference type="ChEBI" id="CHEBI:15378"/>
        <dbReference type="ChEBI" id="CHEBI:59874"/>
        <dbReference type="ChEBI" id="CHEBI:78442"/>
        <dbReference type="ChEBI" id="CHEBI:138191"/>
        <dbReference type="EC" id="3.1.1.29"/>
    </reaction>
</comment>
<comment type="subcellular location">
    <subcellularLocation>
        <location evidence="4">Mitochondrion</location>
    </subcellularLocation>
</comment>
<comment type="disruption phenotype">
    <text evidence="2">Not essential, it can be deleted.</text>
</comment>
<comment type="miscellaneous">
    <text evidence="5">Present with 339 molecules/cell in log phase SD medium.</text>
</comment>
<comment type="similarity">
    <text evidence="7">Belongs to the PTH family.</text>
</comment>
<evidence type="ECO:0000250" key="1">
    <source>
        <dbReference type="UniProtKB" id="P0A7D1"/>
    </source>
</evidence>
<evidence type="ECO:0000269" key="2">
    <source>
    </source>
</evidence>
<evidence type="ECO:0000269" key="3">
    <source>
    </source>
</evidence>
<evidence type="ECO:0000269" key="4">
    <source>
    </source>
</evidence>
<evidence type="ECO:0000269" key="5">
    <source>
    </source>
</evidence>
<evidence type="ECO:0000303" key="6">
    <source>
    </source>
</evidence>
<evidence type="ECO:0000305" key="7"/>
<name>PTH_YEAST</name>
<protein>
    <recommendedName>
        <fullName evidence="6">Peptidyl-tRNA hydrolase</fullName>
        <shortName evidence="6">PTH</shortName>
        <ecNumber evidence="3">3.1.1.29</ecNumber>
    </recommendedName>
</protein>
<accession>P38876</accession>
<accession>D3DLD7</accession>
<proteinExistence type="evidence at protein level"/>
<gene>
    <name type="primary">PTH1</name>
    <name type="ordered locus">YHR189W</name>
</gene>
<dbReference type="EC" id="3.1.1.29" evidence="3"/>
<dbReference type="EMBL" id="U00030">
    <property type="protein sequence ID" value="AAB68361.1"/>
    <property type="molecule type" value="Genomic_DNA"/>
</dbReference>
<dbReference type="EMBL" id="BK006934">
    <property type="protein sequence ID" value="DAA06881.1"/>
    <property type="molecule type" value="Genomic_DNA"/>
</dbReference>
<dbReference type="PIR" id="S46683">
    <property type="entry name" value="S46683"/>
</dbReference>
<dbReference type="RefSeq" id="NP_012059.3">
    <property type="nucleotide sequence ID" value="NM_001179320.3"/>
</dbReference>
<dbReference type="SMR" id="P38876"/>
<dbReference type="BioGRID" id="36623">
    <property type="interactions" value="393"/>
</dbReference>
<dbReference type="DIP" id="DIP-5239N"/>
<dbReference type="FunCoup" id="P38876">
    <property type="interactions" value="152"/>
</dbReference>
<dbReference type="IntAct" id="P38876">
    <property type="interactions" value="2"/>
</dbReference>
<dbReference type="STRING" id="4932.YHR189W"/>
<dbReference type="PaxDb" id="4932-YHR189W"/>
<dbReference type="PeptideAtlas" id="P38876"/>
<dbReference type="TopDownProteomics" id="P38876"/>
<dbReference type="EnsemblFungi" id="YHR189W_mRNA">
    <property type="protein sequence ID" value="YHR189W"/>
    <property type="gene ID" value="YHR189W"/>
</dbReference>
<dbReference type="GeneID" id="856596"/>
<dbReference type="KEGG" id="sce:YHR189W"/>
<dbReference type="AGR" id="SGD:S000001232"/>
<dbReference type="SGD" id="S000001232">
    <property type="gene designation" value="PTH1"/>
</dbReference>
<dbReference type="VEuPathDB" id="FungiDB:YHR189W"/>
<dbReference type="eggNOG" id="KOG2255">
    <property type="taxonomic scope" value="Eukaryota"/>
</dbReference>
<dbReference type="GeneTree" id="ENSGT00390000004247"/>
<dbReference type="HOGENOM" id="CLU_062456_2_1_1"/>
<dbReference type="InParanoid" id="P38876"/>
<dbReference type="OMA" id="HDELQVP"/>
<dbReference type="OrthoDB" id="1711136at2759"/>
<dbReference type="BioCyc" id="YEAST:G3O-31218-MONOMER"/>
<dbReference type="BioGRID-ORCS" id="856596">
    <property type="hits" value="2 hits in 10 CRISPR screens"/>
</dbReference>
<dbReference type="PRO" id="PR:P38876"/>
<dbReference type="Proteomes" id="UP000002311">
    <property type="component" value="Chromosome VIII"/>
</dbReference>
<dbReference type="RNAct" id="P38876">
    <property type="molecule type" value="protein"/>
</dbReference>
<dbReference type="GO" id="GO:0005739">
    <property type="term" value="C:mitochondrion"/>
    <property type="evidence" value="ECO:0007005"/>
    <property type="project" value="SGD"/>
</dbReference>
<dbReference type="GO" id="GO:0004045">
    <property type="term" value="F:peptidyl-tRNA hydrolase activity"/>
    <property type="evidence" value="ECO:0000314"/>
    <property type="project" value="SGD"/>
</dbReference>
<dbReference type="GO" id="GO:0000049">
    <property type="term" value="F:tRNA binding"/>
    <property type="evidence" value="ECO:0007669"/>
    <property type="project" value="UniProtKB-KW"/>
</dbReference>
<dbReference type="GO" id="GO:0032543">
    <property type="term" value="P:mitochondrial translation"/>
    <property type="evidence" value="ECO:0000315"/>
    <property type="project" value="SGD"/>
</dbReference>
<dbReference type="CDD" id="cd00462">
    <property type="entry name" value="PTH"/>
    <property type="match status" value="1"/>
</dbReference>
<dbReference type="FunFam" id="3.40.50.1470:FF:000006">
    <property type="entry name" value="Peptidyl-tRNA hydrolase"/>
    <property type="match status" value="1"/>
</dbReference>
<dbReference type="Gene3D" id="3.40.50.1470">
    <property type="entry name" value="Peptidyl-tRNA hydrolase"/>
    <property type="match status" value="1"/>
</dbReference>
<dbReference type="InterPro" id="IPR001328">
    <property type="entry name" value="Pept_tRNA_hydro"/>
</dbReference>
<dbReference type="InterPro" id="IPR018171">
    <property type="entry name" value="Pept_tRNA_hydro_CS"/>
</dbReference>
<dbReference type="InterPro" id="IPR036416">
    <property type="entry name" value="Pept_tRNA_hydro_sf"/>
</dbReference>
<dbReference type="NCBIfam" id="TIGR00447">
    <property type="entry name" value="pth"/>
    <property type="match status" value="1"/>
</dbReference>
<dbReference type="PANTHER" id="PTHR17224">
    <property type="entry name" value="PEPTIDYL-TRNA HYDROLASE"/>
    <property type="match status" value="1"/>
</dbReference>
<dbReference type="PANTHER" id="PTHR17224:SF1">
    <property type="entry name" value="PEPTIDYL-TRNA HYDROLASE"/>
    <property type="match status" value="1"/>
</dbReference>
<dbReference type="Pfam" id="PF01195">
    <property type="entry name" value="Pept_tRNA_hydro"/>
    <property type="match status" value="1"/>
</dbReference>
<dbReference type="SUPFAM" id="SSF53178">
    <property type="entry name" value="Peptidyl-tRNA hydrolase-like"/>
    <property type="match status" value="1"/>
</dbReference>
<dbReference type="PROSITE" id="PS01195">
    <property type="entry name" value="PEPT_TRNA_HYDROL_1"/>
    <property type="match status" value="1"/>
</dbReference>
<dbReference type="PROSITE" id="PS01196">
    <property type="entry name" value="PEPT_TRNA_HYDROL_2"/>
    <property type="match status" value="1"/>
</dbReference>
<sequence length="190" mass="21036">MSGKWRLVLTGIGNPEPQYAGTRHNVGLYMLELLRKRLGLQGRTYSPVPNTGGKVHYIEDEHCTILRSDGQYMNLSGEQVCKVWARYAKYQARHVVIHDELSVACGKVQLRAPSTSIRGHNGLRSLLKCSGGRVPFAKLAIGIGREPGSRSRDPASVSRWVLGALTPQELQTLLTQSEPAAWRALTQYIS</sequence>
<keyword id="KW-0378">Hydrolase</keyword>
<keyword id="KW-0496">Mitochondrion</keyword>
<keyword id="KW-1185">Reference proteome</keyword>
<keyword id="KW-0694">RNA-binding</keyword>
<keyword id="KW-0820">tRNA-binding</keyword>
<organism>
    <name type="scientific">Saccharomyces cerevisiae (strain ATCC 204508 / S288c)</name>
    <name type="common">Baker's yeast</name>
    <dbReference type="NCBI Taxonomy" id="559292"/>
    <lineage>
        <taxon>Eukaryota</taxon>
        <taxon>Fungi</taxon>
        <taxon>Dikarya</taxon>
        <taxon>Ascomycota</taxon>
        <taxon>Saccharomycotina</taxon>
        <taxon>Saccharomycetes</taxon>
        <taxon>Saccharomycetales</taxon>
        <taxon>Saccharomycetaceae</taxon>
        <taxon>Saccharomyces</taxon>
    </lineage>
</organism>
<reference key="1">
    <citation type="journal article" date="1994" name="Science">
        <title>Complete nucleotide sequence of Saccharomyces cerevisiae chromosome VIII.</title>
        <authorList>
            <person name="Johnston M."/>
            <person name="Andrews S."/>
            <person name="Brinkman R."/>
            <person name="Cooper J."/>
            <person name="Ding H."/>
            <person name="Dover J."/>
            <person name="Du Z."/>
            <person name="Favello A."/>
            <person name="Fulton L."/>
            <person name="Gattung S."/>
            <person name="Geisel C."/>
            <person name="Kirsten J."/>
            <person name="Kucaba T."/>
            <person name="Hillier L.W."/>
            <person name="Jier M."/>
            <person name="Johnston L."/>
            <person name="Langston Y."/>
            <person name="Latreille P."/>
            <person name="Louis E.J."/>
            <person name="Macri C."/>
            <person name="Mardis E."/>
            <person name="Menezes S."/>
            <person name="Mouser L."/>
            <person name="Nhan M."/>
            <person name="Rifkin L."/>
            <person name="Riles L."/>
            <person name="St Peter H."/>
            <person name="Trevaskis E."/>
            <person name="Vaughan K."/>
            <person name="Vignati D."/>
            <person name="Wilcox L."/>
            <person name="Wohldman P."/>
            <person name="Waterston R."/>
            <person name="Wilson R."/>
            <person name="Vaudin M."/>
        </authorList>
    </citation>
    <scope>NUCLEOTIDE SEQUENCE [LARGE SCALE GENOMIC DNA]</scope>
    <source>
        <strain>ATCC 204508 / S288c</strain>
    </source>
</reference>
<reference key="2">
    <citation type="journal article" date="2014" name="G3 (Bethesda)">
        <title>The reference genome sequence of Saccharomyces cerevisiae: Then and now.</title>
        <authorList>
            <person name="Engel S.R."/>
            <person name="Dietrich F.S."/>
            <person name="Fisk D.G."/>
            <person name="Binkley G."/>
            <person name="Balakrishnan R."/>
            <person name="Costanzo M.C."/>
            <person name="Dwight S.S."/>
            <person name="Hitz B.C."/>
            <person name="Karra K."/>
            <person name="Nash R.S."/>
            <person name="Weng S."/>
            <person name="Wong E.D."/>
            <person name="Lloyd P."/>
            <person name="Skrzypek M.S."/>
            <person name="Miyasato S.R."/>
            <person name="Simison M."/>
            <person name="Cherry J.M."/>
        </authorList>
    </citation>
    <scope>GENOME REANNOTATION</scope>
    <source>
        <strain>ATCC 204508 / S288c</strain>
    </source>
</reference>
<reference key="3">
    <citation type="journal article" date="1995" name="Protein Sci.">
        <title>New protein functions in yeast chromosome VIII.</title>
        <authorList>
            <person name="Ouzounis C."/>
            <person name="Bork P."/>
            <person name="Casari G."/>
            <person name="Sander C."/>
        </authorList>
    </citation>
    <scope>SIMILARITY TO PTH</scope>
</reference>
<reference key="4">
    <citation type="journal article" date="2002" name="Proc. Natl. Acad. Sci. U.S.A.">
        <title>Orthologs of a novel archaeal and of the bacterial peptidyl-tRNA hydrolase are nonessential in yeast.</title>
        <authorList>
            <person name="Rosas-Sandoval G."/>
            <person name="Ambrogelly A."/>
            <person name="Rinehart J."/>
            <person name="Wei D."/>
            <person name="Cruz-Vera L.R."/>
            <person name="Graham D.E."/>
            <person name="Stetter K.O."/>
            <person name="Guarneros G."/>
            <person name="Soell D."/>
        </authorList>
    </citation>
    <scope>FUNCTION</scope>
</reference>
<reference key="5">
    <citation type="journal article" date="2002" name="Mol. Microbiol.">
        <title>Peptidyl-tRNA hydrolase in Bacillus subtilis, encoded by spoVC, is essential to vegetative growth, whereas the homologous enzyme in Saccharomyces cerevisiae is dispensable.</title>
        <authorList>
            <person name="Menez J."/>
            <person name="Buckingham R.H."/>
            <person name="de Zamaroczy M."/>
            <person name="Campelli C.K."/>
        </authorList>
    </citation>
    <scope>DISRUPTION PHENOTYPE</scope>
</reference>
<reference key="6">
    <citation type="journal article" date="2003" name="Nature">
        <title>Global analysis of protein localization in budding yeast.</title>
        <authorList>
            <person name="Huh W.-K."/>
            <person name="Falvo J.V."/>
            <person name="Gerke L.C."/>
            <person name="Carroll A.S."/>
            <person name="Howson R.W."/>
            <person name="Weissman J.S."/>
            <person name="O'Shea E.K."/>
        </authorList>
    </citation>
    <scope>SUBCELLULAR LOCATION [LARGE SCALE ANALYSIS]</scope>
</reference>
<reference key="7">
    <citation type="journal article" date="2003" name="Nature">
        <title>Global analysis of protein expression in yeast.</title>
        <authorList>
            <person name="Ghaemmaghami S."/>
            <person name="Huh W.-K."/>
            <person name="Bower K."/>
            <person name="Howson R.W."/>
            <person name="Belle A."/>
            <person name="Dephoure N."/>
            <person name="O'Shea E.K."/>
            <person name="Weissman J.S."/>
        </authorList>
    </citation>
    <scope>LEVEL OF PROTEIN EXPRESSION [LARGE SCALE ANALYSIS]</scope>
</reference>
<reference key="8">
    <citation type="journal article" date="2003" name="Nucleic Acids Res.">
        <title>Peptidyl-tRNA hydrolase from Sulfolobus solfataricus.</title>
        <authorList>
            <person name="Fromant M."/>
            <person name="Ferri-Fioni M.-L."/>
            <person name="Plateau P."/>
            <person name="Blanquet S."/>
        </authorList>
    </citation>
    <scope>FUNCTION</scope>
    <scope>CATALYTIC ACTIVITY</scope>
</reference>
<feature type="chain" id="PRO_0000187867" description="Peptidyl-tRNA hydrolase">
    <location>
        <begin position="1"/>
        <end position="190"/>
    </location>
</feature>
<feature type="active site" description="Proton acceptor" evidence="1">
    <location>
        <position position="24"/>
    </location>
</feature>
<feature type="binding site" evidence="1">
    <location>
        <position position="19"/>
    </location>
    <ligand>
        <name>tRNA</name>
        <dbReference type="ChEBI" id="CHEBI:17843"/>
    </ligand>
</feature>
<feature type="binding site" evidence="1">
    <location>
        <position position="72"/>
    </location>
    <ligand>
        <name>tRNA</name>
        <dbReference type="ChEBI" id="CHEBI:17843"/>
    </ligand>
</feature>
<feature type="binding site" evidence="1">
    <location>
        <position position="74"/>
    </location>
    <ligand>
        <name>tRNA</name>
        <dbReference type="ChEBI" id="CHEBI:17843"/>
    </ligand>
</feature>
<feature type="binding site" evidence="1">
    <location>
        <position position="121"/>
    </location>
    <ligand>
        <name>tRNA</name>
        <dbReference type="ChEBI" id="CHEBI:17843"/>
    </ligand>
</feature>
<feature type="site" description="Stabilizes the basic form of H active site to accept a proton" evidence="1">
    <location>
        <position position="99"/>
    </location>
</feature>